<accession>B8E786</accession>
<gene>
    <name evidence="1" type="primary">astB</name>
    <name type="ordered locus">Sbal223_1854</name>
</gene>
<organism>
    <name type="scientific">Shewanella baltica (strain OS223)</name>
    <dbReference type="NCBI Taxonomy" id="407976"/>
    <lineage>
        <taxon>Bacteria</taxon>
        <taxon>Pseudomonadati</taxon>
        <taxon>Pseudomonadota</taxon>
        <taxon>Gammaproteobacteria</taxon>
        <taxon>Alteromonadales</taxon>
        <taxon>Shewanellaceae</taxon>
        <taxon>Shewanella</taxon>
    </lineage>
</organism>
<comment type="function">
    <text evidence="1">Catalyzes the hydrolysis of N(2)-succinylarginine into N(2)-succinylornithine, ammonia and CO(2).</text>
</comment>
<comment type="catalytic activity">
    <reaction evidence="1">
        <text>N(2)-succinyl-L-arginine + 2 H2O + 2 H(+) = N(2)-succinyl-L-ornithine + 2 NH4(+) + CO2</text>
        <dbReference type="Rhea" id="RHEA:19533"/>
        <dbReference type="ChEBI" id="CHEBI:15377"/>
        <dbReference type="ChEBI" id="CHEBI:15378"/>
        <dbReference type="ChEBI" id="CHEBI:16526"/>
        <dbReference type="ChEBI" id="CHEBI:28938"/>
        <dbReference type="ChEBI" id="CHEBI:58241"/>
        <dbReference type="ChEBI" id="CHEBI:58514"/>
        <dbReference type="EC" id="3.5.3.23"/>
    </reaction>
</comment>
<comment type="pathway">
    <text evidence="1">Amino-acid degradation; L-arginine degradation via AST pathway; L-glutamate and succinate from L-arginine: step 2/5.</text>
</comment>
<comment type="subunit">
    <text evidence="1">Homodimer.</text>
</comment>
<comment type="similarity">
    <text evidence="1">Belongs to the succinylarginine dihydrolase family.</text>
</comment>
<reference key="1">
    <citation type="submission" date="2008-12" db="EMBL/GenBank/DDBJ databases">
        <title>Complete sequence of chromosome of Shewanella baltica OS223.</title>
        <authorList>
            <consortium name="US DOE Joint Genome Institute"/>
            <person name="Lucas S."/>
            <person name="Copeland A."/>
            <person name="Lapidus A."/>
            <person name="Glavina del Rio T."/>
            <person name="Dalin E."/>
            <person name="Tice H."/>
            <person name="Bruce D."/>
            <person name="Goodwin L."/>
            <person name="Pitluck S."/>
            <person name="Chertkov O."/>
            <person name="Meincke L."/>
            <person name="Brettin T."/>
            <person name="Detter J.C."/>
            <person name="Han C."/>
            <person name="Kuske C.R."/>
            <person name="Larimer F."/>
            <person name="Land M."/>
            <person name="Hauser L."/>
            <person name="Kyrpides N."/>
            <person name="Ovchinnikova G."/>
            <person name="Brettar I."/>
            <person name="Rodrigues J."/>
            <person name="Konstantinidis K."/>
            <person name="Tiedje J."/>
        </authorList>
    </citation>
    <scope>NUCLEOTIDE SEQUENCE [LARGE SCALE GENOMIC DNA]</scope>
    <source>
        <strain>OS223</strain>
    </source>
</reference>
<protein>
    <recommendedName>
        <fullName evidence="1">N-succinylarginine dihydrolase</fullName>
        <ecNumber evidence="1">3.5.3.23</ecNumber>
    </recommendedName>
</protein>
<keyword id="KW-0056">Arginine metabolism</keyword>
<keyword id="KW-0378">Hydrolase</keyword>
<dbReference type="EC" id="3.5.3.23" evidence="1"/>
<dbReference type="EMBL" id="CP001252">
    <property type="protein sequence ID" value="ACK46359.1"/>
    <property type="molecule type" value="Genomic_DNA"/>
</dbReference>
<dbReference type="RefSeq" id="WP_012587464.1">
    <property type="nucleotide sequence ID" value="NC_011663.1"/>
</dbReference>
<dbReference type="SMR" id="B8E786"/>
<dbReference type="KEGG" id="sbp:Sbal223_1854"/>
<dbReference type="HOGENOM" id="CLU_053835_0_0_6"/>
<dbReference type="UniPathway" id="UPA00185">
    <property type="reaction ID" value="UER00280"/>
</dbReference>
<dbReference type="Proteomes" id="UP000002507">
    <property type="component" value="Chromosome"/>
</dbReference>
<dbReference type="GO" id="GO:0009015">
    <property type="term" value="F:N-succinylarginine dihydrolase activity"/>
    <property type="evidence" value="ECO:0007669"/>
    <property type="project" value="UniProtKB-UniRule"/>
</dbReference>
<dbReference type="GO" id="GO:0019544">
    <property type="term" value="P:arginine catabolic process to glutamate"/>
    <property type="evidence" value="ECO:0007669"/>
    <property type="project" value="UniProtKB-UniRule"/>
</dbReference>
<dbReference type="GO" id="GO:0019545">
    <property type="term" value="P:arginine catabolic process to succinate"/>
    <property type="evidence" value="ECO:0007669"/>
    <property type="project" value="UniProtKB-UniRule"/>
</dbReference>
<dbReference type="FunFam" id="3.75.10.20:FF:000001">
    <property type="entry name" value="N-succinylarginine dihydrolase"/>
    <property type="match status" value="1"/>
</dbReference>
<dbReference type="Gene3D" id="3.75.10.20">
    <property type="entry name" value="Succinylarginine dihydrolase"/>
    <property type="match status" value="1"/>
</dbReference>
<dbReference type="HAMAP" id="MF_01172">
    <property type="entry name" value="AstB"/>
    <property type="match status" value="1"/>
</dbReference>
<dbReference type="InterPro" id="IPR037031">
    <property type="entry name" value="AstB_sf"/>
</dbReference>
<dbReference type="InterPro" id="IPR007079">
    <property type="entry name" value="SuccinylArg_d-Hdrlase_AstB"/>
</dbReference>
<dbReference type="NCBIfam" id="TIGR03241">
    <property type="entry name" value="arg_catab_astB"/>
    <property type="match status" value="1"/>
</dbReference>
<dbReference type="NCBIfam" id="NF009789">
    <property type="entry name" value="PRK13281.1"/>
    <property type="match status" value="1"/>
</dbReference>
<dbReference type="PANTHER" id="PTHR30420">
    <property type="entry name" value="N-SUCCINYLARGININE DIHYDROLASE"/>
    <property type="match status" value="1"/>
</dbReference>
<dbReference type="PANTHER" id="PTHR30420:SF2">
    <property type="entry name" value="N-SUCCINYLARGININE DIHYDROLASE"/>
    <property type="match status" value="1"/>
</dbReference>
<dbReference type="Pfam" id="PF04996">
    <property type="entry name" value="AstB"/>
    <property type="match status" value="1"/>
</dbReference>
<dbReference type="SUPFAM" id="SSF55909">
    <property type="entry name" value="Pentein"/>
    <property type="match status" value="1"/>
</dbReference>
<proteinExistence type="inferred from homology"/>
<feature type="chain" id="PRO_1000164371" description="N-succinylarginine dihydrolase">
    <location>
        <begin position="1"/>
        <end position="444"/>
    </location>
</feature>
<feature type="active site" evidence="1">
    <location>
        <position position="174"/>
    </location>
</feature>
<feature type="active site" evidence="1">
    <location>
        <position position="250"/>
    </location>
</feature>
<feature type="active site" description="Nucleophile" evidence="1">
    <location>
        <position position="368"/>
    </location>
</feature>
<feature type="binding site" evidence="1">
    <location>
        <begin position="19"/>
        <end position="28"/>
    </location>
    <ligand>
        <name>substrate</name>
    </ligand>
</feature>
<feature type="binding site" evidence="1">
    <location>
        <position position="110"/>
    </location>
    <ligand>
        <name>substrate</name>
    </ligand>
</feature>
<feature type="binding site" evidence="1">
    <location>
        <begin position="137"/>
        <end position="138"/>
    </location>
    <ligand>
        <name>substrate</name>
    </ligand>
</feature>
<feature type="binding site" evidence="1">
    <location>
        <position position="214"/>
    </location>
    <ligand>
        <name>substrate</name>
    </ligand>
</feature>
<feature type="binding site" evidence="1">
    <location>
        <position position="252"/>
    </location>
    <ligand>
        <name>substrate</name>
    </ligand>
</feature>
<feature type="binding site" evidence="1">
    <location>
        <position position="362"/>
    </location>
    <ligand>
        <name>substrate</name>
    </ligand>
</feature>
<evidence type="ECO:0000255" key="1">
    <source>
        <dbReference type="HAMAP-Rule" id="MF_01172"/>
    </source>
</evidence>
<sequence length="444" mass="49215">MKHFEANFDGLVGPTHNYAGLSFGNVASLSNAALVSNPKAAAKQGLQKAKALADMGMVQGMLAPQERPDLYTLRRIGFSGSDANVLKQAAKEAPMLLNACCSASSMWTANAATVSPSADTRDGKLHFTPANLVDKLHRSIEPLTTGRILTATFSDPHYFHHHSHLPEHNSFGDEGAANHTRLCNEYGHAGVELFVYGQEATNPNAPKPQKYPARQTLEASMAVARLHQLEEDNCVFIQQNPDVIDQGVFHNDVIAVGNQNVLFYHEQAFLNTQHKIDEIKRKLDTELYFIEVPTAKVAINDAVKSYLFNTQIITLPSGEMVIVAPTDCQENPAVFAYLNELLTLNTPIKQVLYFDVKQSMQNGGGPACLRLRVAMNEMEVAAVNQHTLMNDALFSRLNLWVDKHYRDRLTTQDLADPQLIIESRTALDELTQIMKLGSVYQFQR</sequence>
<name>ASTB_SHEB2</name>